<keyword id="KW-1003">Cell membrane</keyword>
<keyword id="KW-0472">Membrane</keyword>
<keyword id="KW-1185">Reference proteome</keyword>
<keyword id="KW-0762">Sugar transport</keyword>
<keyword id="KW-0808">Transferase</keyword>
<keyword id="KW-0812">Transmembrane</keyword>
<keyword id="KW-1133">Transmembrane helix</keyword>
<keyword id="KW-0813">Transport</keyword>
<feature type="chain" id="PRO_0000186712" description="Putative permease IIC component YwbA">
    <location>
        <begin position="1"/>
        <end position="444"/>
    </location>
</feature>
<feature type="transmembrane region" description="Helical" evidence="2">
    <location>
        <begin position="31"/>
        <end position="51"/>
    </location>
</feature>
<feature type="transmembrane region" description="Helical" evidence="2">
    <location>
        <begin position="72"/>
        <end position="92"/>
    </location>
</feature>
<feature type="transmembrane region" description="Helical" evidence="2">
    <location>
        <begin position="104"/>
        <end position="124"/>
    </location>
</feature>
<feature type="transmembrane region" description="Helical" evidence="2">
    <location>
        <begin position="138"/>
        <end position="158"/>
    </location>
</feature>
<feature type="transmembrane region" description="Helical" evidence="2">
    <location>
        <begin position="187"/>
        <end position="207"/>
    </location>
</feature>
<feature type="transmembrane region" description="Helical" evidence="2">
    <location>
        <begin position="223"/>
        <end position="243"/>
    </location>
</feature>
<feature type="transmembrane region" description="Helical" evidence="2">
    <location>
        <begin position="246"/>
        <end position="266"/>
    </location>
</feature>
<feature type="transmembrane region" description="Helical" evidence="2">
    <location>
        <begin position="291"/>
        <end position="311"/>
    </location>
</feature>
<feature type="transmembrane region" description="Helical" evidence="2">
    <location>
        <begin position="349"/>
        <end position="371"/>
    </location>
</feature>
<feature type="transmembrane region" description="Helical" evidence="2">
    <location>
        <begin position="402"/>
        <end position="422"/>
    </location>
</feature>
<feature type="domain" description="PTS EIIC type-3" evidence="2">
    <location>
        <begin position="8"/>
        <end position="421"/>
    </location>
</feature>
<reference key="1">
    <citation type="journal article" date="1993" name="Mol. Microbiol.">
        <title>Bacillus subtilis genome project: cloning and sequencing of the 97 kb region from 325 degrees to 333 degrees.</title>
        <authorList>
            <person name="Glaser P."/>
            <person name="Kunst F."/>
            <person name="Arnaud M."/>
            <person name="Coudart M.P."/>
            <person name="Gonzales W."/>
            <person name="Hullo M.-F."/>
            <person name="Ionescu M."/>
            <person name="Lubochinsky B."/>
            <person name="Marcelino L."/>
            <person name="Moszer I."/>
            <person name="Presecan E."/>
            <person name="Santana M."/>
            <person name="Schneider E."/>
            <person name="Schweizer J."/>
            <person name="Vertes A."/>
            <person name="Rapoport G."/>
            <person name="Danchin A."/>
        </authorList>
    </citation>
    <scope>NUCLEOTIDE SEQUENCE [GENOMIC DNA]</scope>
    <source>
        <strain>168</strain>
    </source>
</reference>
<reference key="2">
    <citation type="journal article" date="1997" name="Nature">
        <title>The complete genome sequence of the Gram-positive bacterium Bacillus subtilis.</title>
        <authorList>
            <person name="Kunst F."/>
            <person name="Ogasawara N."/>
            <person name="Moszer I."/>
            <person name="Albertini A.M."/>
            <person name="Alloni G."/>
            <person name="Azevedo V."/>
            <person name="Bertero M.G."/>
            <person name="Bessieres P."/>
            <person name="Bolotin A."/>
            <person name="Borchert S."/>
            <person name="Borriss R."/>
            <person name="Boursier L."/>
            <person name="Brans A."/>
            <person name="Braun M."/>
            <person name="Brignell S.C."/>
            <person name="Bron S."/>
            <person name="Brouillet S."/>
            <person name="Bruschi C.V."/>
            <person name="Caldwell B."/>
            <person name="Capuano V."/>
            <person name="Carter N.M."/>
            <person name="Choi S.-K."/>
            <person name="Codani J.-J."/>
            <person name="Connerton I.F."/>
            <person name="Cummings N.J."/>
            <person name="Daniel R.A."/>
            <person name="Denizot F."/>
            <person name="Devine K.M."/>
            <person name="Duesterhoeft A."/>
            <person name="Ehrlich S.D."/>
            <person name="Emmerson P.T."/>
            <person name="Entian K.-D."/>
            <person name="Errington J."/>
            <person name="Fabret C."/>
            <person name="Ferrari E."/>
            <person name="Foulger D."/>
            <person name="Fritz C."/>
            <person name="Fujita M."/>
            <person name="Fujita Y."/>
            <person name="Fuma S."/>
            <person name="Galizzi A."/>
            <person name="Galleron N."/>
            <person name="Ghim S.-Y."/>
            <person name="Glaser P."/>
            <person name="Goffeau A."/>
            <person name="Golightly E.J."/>
            <person name="Grandi G."/>
            <person name="Guiseppi G."/>
            <person name="Guy B.J."/>
            <person name="Haga K."/>
            <person name="Haiech J."/>
            <person name="Harwood C.R."/>
            <person name="Henaut A."/>
            <person name="Hilbert H."/>
            <person name="Holsappel S."/>
            <person name="Hosono S."/>
            <person name="Hullo M.-F."/>
            <person name="Itaya M."/>
            <person name="Jones L.-M."/>
            <person name="Joris B."/>
            <person name="Karamata D."/>
            <person name="Kasahara Y."/>
            <person name="Klaerr-Blanchard M."/>
            <person name="Klein C."/>
            <person name="Kobayashi Y."/>
            <person name="Koetter P."/>
            <person name="Koningstein G."/>
            <person name="Krogh S."/>
            <person name="Kumano M."/>
            <person name="Kurita K."/>
            <person name="Lapidus A."/>
            <person name="Lardinois S."/>
            <person name="Lauber J."/>
            <person name="Lazarevic V."/>
            <person name="Lee S.-M."/>
            <person name="Levine A."/>
            <person name="Liu H."/>
            <person name="Masuda S."/>
            <person name="Mauel C."/>
            <person name="Medigue C."/>
            <person name="Medina N."/>
            <person name="Mellado R.P."/>
            <person name="Mizuno M."/>
            <person name="Moestl D."/>
            <person name="Nakai S."/>
            <person name="Noback M."/>
            <person name="Noone D."/>
            <person name="O'Reilly M."/>
            <person name="Ogawa K."/>
            <person name="Ogiwara A."/>
            <person name="Oudega B."/>
            <person name="Park S.-H."/>
            <person name="Parro V."/>
            <person name="Pohl T.M."/>
            <person name="Portetelle D."/>
            <person name="Porwollik S."/>
            <person name="Prescott A.M."/>
            <person name="Presecan E."/>
            <person name="Pujic P."/>
            <person name="Purnelle B."/>
            <person name="Rapoport G."/>
            <person name="Rey M."/>
            <person name="Reynolds S."/>
            <person name="Rieger M."/>
            <person name="Rivolta C."/>
            <person name="Rocha E."/>
            <person name="Roche B."/>
            <person name="Rose M."/>
            <person name="Sadaie Y."/>
            <person name="Sato T."/>
            <person name="Scanlan E."/>
            <person name="Schleich S."/>
            <person name="Schroeter R."/>
            <person name="Scoffone F."/>
            <person name="Sekiguchi J."/>
            <person name="Sekowska A."/>
            <person name="Seror S.J."/>
            <person name="Serror P."/>
            <person name="Shin B.-S."/>
            <person name="Soldo B."/>
            <person name="Sorokin A."/>
            <person name="Tacconi E."/>
            <person name="Takagi T."/>
            <person name="Takahashi H."/>
            <person name="Takemaru K."/>
            <person name="Takeuchi M."/>
            <person name="Tamakoshi A."/>
            <person name="Tanaka T."/>
            <person name="Terpstra P."/>
            <person name="Tognoni A."/>
            <person name="Tosato V."/>
            <person name="Uchiyama S."/>
            <person name="Vandenbol M."/>
            <person name="Vannier F."/>
            <person name="Vassarotti A."/>
            <person name="Viari A."/>
            <person name="Wambutt R."/>
            <person name="Wedler E."/>
            <person name="Wedler H."/>
            <person name="Weitzenegger T."/>
            <person name="Winters P."/>
            <person name="Wipat A."/>
            <person name="Yamamoto H."/>
            <person name="Yamane K."/>
            <person name="Yasumoto K."/>
            <person name="Yata K."/>
            <person name="Yoshida K."/>
            <person name="Yoshikawa H.-F."/>
            <person name="Zumstein E."/>
            <person name="Yoshikawa H."/>
            <person name="Danchin A."/>
        </authorList>
    </citation>
    <scope>NUCLEOTIDE SEQUENCE [LARGE SCALE GENOMIC DNA]</scope>
    <source>
        <strain>168</strain>
    </source>
</reference>
<comment type="function">
    <text evidence="1">The phosphoenolpyruvate-dependent sugar phosphotransferase system (PTS), a major carbohydrate active -transport system, catalyzes the phosphorylation of incoming sugar substrates concomitant with their translocation across the cell membrane.</text>
</comment>
<comment type="subcellular location">
    <subcellularLocation>
        <location evidence="2">Cell membrane</location>
        <topology evidence="2">Multi-pass membrane protein</topology>
    </subcellularLocation>
</comment>
<comment type="domain">
    <text>The EIIC domain forms the PTS system translocation channel and contains the specific substrate-binding site.</text>
</comment>
<name>YWBA_BACSU</name>
<evidence type="ECO:0000250" key="1"/>
<evidence type="ECO:0000255" key="2">
    <source>
        <dbReference type="PROSITE-ProRule" id="PRU00428"/>
    </source>
</evidence>
<sequence>MSTFTRVMEEKIMPVAGKIAGQRHLSALRDGIILTMPLIIIGSVFLILTSLPIPGYADFMASVFGNEWADKLGYPVNASFDIMAMIAAFGIAYRLAESYGVDALSAGAISIAAFLLATPFEVPFTPHGSTESIMVGGGIPITLLGSKGLFVAMLIALFSTEIYRYIIQKNIVFKMPDGVPPAVSKSFVALIPGFIIVLLVWLARLLIEMTPFQSLHNVVGDLLGTPLSILGGSLGGSLIAEFVQMLLWSCGIHGASIIGGIMAPIWYGAMDANRLAFQAGEALPSIFTTQFFQIWINVGGSGATLALVLTMLVRSRSKQMKQLGRLGIGPALFNINEPIIFGMPIVMNPLLIVPFIIAPLLTITATYIGMSTGLVARPAGIAVPWTMPPLISGYLATGGKVSGAVMQLVNLLITCAIYYPFFRIWDHQKWREESAVESGDKNVM</sequence>
<organism>
    <name type="scientific">Bacillus subtilis (strain 168)</name>
    <dbReference type="NCBI Taxonomy" id="224308"/>
    <lineage>
        <taxon>Bacteria</taxon>
        <taxon>Bacillati</taxon>
        <taxon>Bacillota</taxon>
        <taxon>Bacilli</taxon>
        <taxon>Bacillales</taxon>
        <taxon>Bacillaceae</taxon>
        <taxon>Bacillus</taxon>
    </lineage>
</organism>
<accession>P39584</accession>
<proteinExistence type="inferred from homology"/>
<gene>
    <name type="primary">ywbA</name>
    <name type="ordered locus">BSU38390</name>
    <name type="ORF">ipa-16d</name>
</gene>
<protein>
    <recommendedName>
        <fullName>Putative permease IIC component YwbA</fullName>
    </recommendedName>
    <alternativeName>
        <fullName>Putative PTS system EIIC component</fullName>
    </alternativeName>
</protein>
<dbReference type="EMBL" id="X73124">
    <property type="protein sequence ID" value="CAA51572.1"/>
    <property type="molecule type" value="Genomic_DNA"/>
</dbReference>
<dbReference type="EMBL" id="AL009126">
    <property type="protein sequence ID" value="CAB15865.1"/>
    <property type="molecule type" value="Genomic_DNA"/>
</dbReference>
<dbReference type="PIR" id="S39671">
    <property type="entry name" value="S39671"/>
</dbReference>
<dbReference type="RefSeq" id="NP_391718.1">
    <property type="nucleotide sequence ID" value="NC_000964.3"/>
</dbReference>
<dbReference type="SMR" id="P39584"/>
<dbReference type="FunCoup" id="P39584">
    <property type="interactions" value="142"/>
</dbReference>
<dbReference type="STRING" id="224308.BSU38390"/>
<dbReference type="PaxDb" id="224308-BSU38390"/>
<dbReference type="EnsemblBacteria" id="CAB15865">
    <property type="protein sequence ID" value="CAB15865"/>
    <property type="gene ID" value="BSU_38390"/>
</dbReference>
<dbReference type="GeneID" id="937331"/>
<dbReference type="KEGG" id="bsu:BSU38390"/>
<dbReference type="PATRIC" id="fig|224308.179.peg.4155"/>
<dbReference type="eggNOG" id="COG1455">
    <property type="taxonomic scope" value="Bacteria"/>
</dbReference>
<dbReference type="InParanoid" id="P39584"/>
<dbReference type="OrthoDB" id="1641940at2"/>
<dbReference type="PhylomeDB" id="P39584"/>
<dbReference type="BioCyc" id="BSUB:BSU38390-MONOMER"/>
<dbReference type="Proteomes" id="UP000001570">
    <property type="component" value="Chromosome"/>
</dbReference>
<dbReference type="GO" id="GO:0005886">
    <property type="term" value="C:plasma membrane"/>
    <property type="evidence" value="ECO:0000318"/>
    <property type="project" value="GO_Central"/>
</dbReference>
<dbReference type="GO" id="GO:0008982">
    <property type="term" value="F:protein-N(PI)-phosphohistidine-sugar phosphotransferase activity"/>
    <property type="evidence" value="ECO:0007669"/>
    <property type="project" value="InterPro"/>
</dbReference>
<dbReference type="GO" id="GO:1901264">
    <property type="term" value="P:carbohydrate derivative transport"/>
    <property type="evidence" value="ECO:0000318"/>
    <property type="project" value="GO_Central"/>
</dbReference>
<dbReference type="GO" id="GO:0009401">
    <property type="term" value="P:phosphoenolpyruvate-dependent sugar phosphotransferase system"/>
    <property type="evidence" value="ECO:0007669"/>
    <property type="project" value="InterPro"/>
</dbReference>
<dbReference type="InterPro" id="IPR003352">
    <property type="entry name" value="PTS_EIIC"/>
</dbReference>
<dbReference type="InterPro" id="IPR004501">
    <property type="entry name" value="PTS_EIIC_3"/>
</dbReference>
<dbReference type="InterPro" id="IPR004796">
    <property type="entry name" value="PTS_IIC_cello"/>
</dbReference>
<dbReference type="InterPro" id="IPR051088">
    <property type="entry name" value="PTS_Sugar-EIIC/EIIB"/>
</dbReference>
<dbReference type="NCBIfam" id="TIGR00359">
    <property type="entry name" value="cello_pts_IIC"/>
    <property type="match status" value="1"/>
</dbReference>
<dbReference type="NCBIfam" id="TIGR00410">
    <property type="entry name" value="lacE"/>
    <property type="match status" value="1"/>
</dbReference>
<dbReference type="PANTHER" id="PTHR33989">
    <property type="match status" value="1"/>
</dbReference>
<dbReference type="PANTHER" id="PTHR33989:SF11">
    <property type="entry name" value="LICHENAN PERMEASE IIC COMPONENT"/>
    <property type="match status" value="1"/>
</dbReference>
<dbReference type="Pfam" id="PF02378">
    <property type="entry name" value="PTS_EIIC"/>
    <property type="match status" value="1"/>
</dbReference>
<dbReference type="PIRSF" id="PIRSF006351">
    <property type="entry name" value="PTS_EIIC-Cellobiose"/>
    <property type="match status" value="1"/>
</dbReference>
<dbReference type="PROSITE" id="PS51105">
    <property type="entry name" value="PTS_EIIC_TYPE_3"/>
    <property type="match status" value="1"/>
</dbReference>